<comment type="function">
    <text evidence="1">May play a role in DNA repair. It seems to be involved in an RecBC-independent recombinational process of DNA repair. It may act with RecF and RecO.</text>
</comment>
<comment type="similarity">
    <text evidence="1">Belongs to the RecR family.</text>
</comment>
<reference key="1">
    <citation type="journal article" date="2004" name="Nucleic Acids Res.">
        <title>Unique features revealed by the genome sequence of Acinetobacter sp. ADP1, a versatile and naturally transformation competent bacterium.</title>
        <authorList>
            <person name="Barbe V."/>
            <person name="Vallenet D."/>
            <person name="Fonknechten N."/>
            <person name="Kreimeyer A."/>
            <person name="Oztas S."/>
            <person name="Labarre L."/>
            <person name="Cruveiller S."/>
            <person name="Robert C."/>
            <person name="Duprat S."/>
            <person name="Wincker P."/>
            <person name="Ornston L.N."/>
            <person name="Weissenbach J."/>
            <person name="Marliere P."/>
            <person name="Cohen G.N."/>
            <person name="Medigue C."/>
        </authorList>
    </citation>
    <scope>NUCLEOTIDE SEQUENCE [LARGE SCALE GENOMIC DNA]</scope>
    <source>
        <strain>ATCC 33305 / BD413 / ADP1</strain>
    </source>
</reference>
<feature type="chain" id="PRO_0000190267" description="Recombination protein RecR">
    <location>
        <begin position="1"/>
        <end position="198"/>
    </location>
</feature>
<feature type="domain" description="Toprim" evidence="1">
    <location>
        <begin position="79"/>
        <end position="174"/>
    </location>
</feature>
<feature type="zinc finger region" description="C4-type" evidence="1">
    <location>
        <begin position="56"/>
        <end position="71"/>
    </location>
</feature>
<accession>Q6FA18</accession>
<protein>
    <recommendedName>
        <fullName evidence="1">Recombination protein RecR</fullName>
    </recommendedName>
</protein>
<evidence type="ECO:0000255" key="1">
    <source>
        <dbReference type="HAMAP-Rule" id="MF_00017"/>
    </source>
</evidence>
<sequence>MFSDRFEQLVQALRILPSVGPKSAQRMALHLLMKNREGAFGLAHALHEASSHIHECKICHSLTENEICDICLSNDRDQHLLCVVESPADVMAIEQSGSFRGKYHVLGGHLSPLDGIGPEEIGIPYLIQRLSSGEIEEVILATNATVEGQATAHYLLEATKHLPVHMTRIAQGVPQGGELEYVDSHTLSQAVHNRMKMK</sequence>
<keyword id="KW-0227">DNA damage</keyword>
<keyword id="KW-0233">DNA recombination</keyword>
<keyword id="KW-0234">DNA repair</keyword>
<keyword id="KW-0479">Metal-binding</keyword>
<keyword id="KW-0862">Zinc</keyword>
<keyword id="KW-0863">Zinc-finger</keyword>
<name>RECR_ACIAD</name>
<dbReference type="EMBL" id="CR543861">
    <property type="protein sequence ID" value="CAG69095.1"/>
    <property type="molecule type" value="Genomic_DNA"/>
</dbReference>
<dbReference type="RefSeq" id="WP_004928046.1">
    <property type="nucleotide sequence ID" value="NC_005966.1"/>
</dbReference>
<dbReference type="SMR" id="Q6FA18"/>
<dbReference type="STRING" id="202950.GCA_001485005_00091"/>
<dbReference type="GeneID" id="45234632"/>
<dbReference type="KEGG" id="aci:ACIAD2312"/>
<dbReference type="eggNOG" id="COG0353">
    <property type="taxonomic scope" value="Bacteria"/>
</dbReference>
<dbReference type="HOGENOM" id="CLU_060739_1_2_6"/>
<dbReference type="OrthoDB" id="9802672at2"/>
<dbReference type="BioCyc" id="ASP62977:ACIAD_RS10575-MONOMER"/>
<dbReference type="Proteomes" id="UP000000430">
    <property type="component" value="Chromosome"/>
</dbReference>
<dbReference type="GO" id="GO:0003677">
    <property type="term" value="F:DNA binding"/>
    <property type="evidence" value="ECO:0007669"/>
    <property type="project" value="UniProtKB-UniRule"/>
</dbReference>
<dbReference type="GO" id="GO:0008270">
    <property type="term" value="F:zinc ion binding"/>
    <property type="evidence" value="ECO:0007669"/>
    <property type="project" value="UniProtKB-KW"/>
</dbReference>
<dbReference type="GO" id="GO:0006310">
    <property type="term" value="P:DNA recombination"/>
    <property type="evidence" value="ECO:0007669"/>
    <property type="project" value="UniProtKB-UniRule"/>
</dbReference>
<dbReference type="GO" id="GO:0006281">
    <property type="term" value="P:DNA repair"/>
    <property type="evidence" value="ECO:0007669"/>
    <property type="project" value="UniProtKB-UniRule"/>
</dbReference>
<dbReference type="CDD" id="cd01025">
    <property type="entry name" value="TOPRIM_recR"/>
    <property type="match status" value="1"/>
</dbReference>
<dbReference type="Gene3D" id="3.40.1360.10">
    <property type="match status" value="1"/>
</dbReference>
<dbReference type="Gene3D" id="6.10.250.240">
    <property type="match status" value="1"/>
</dbReference>
<dbReference type="Gene3D" id="1.10.8.420">
    <property type="entry name" value="RecR Domain 1"/>
    <property type="match status" value="1"/>
</dbReference>
<dbReference type="HAMAP" id="MF_00017">
    <property type="entry name" value="RecR"/>
    <property type="match status" value="1"/>
</dbReference>
<dbReference type="InterPro" id="IPR000093">
    <property type="entry name" value="DNA_Rcmb_RecR"/>
</dbReference>
<dbReference type="InterPro" id="IPR023627">
    <property type="entry name" value="Rcmb_RecR"/>
</dbReference>
<dbReference type="InterPro" id="IPR015967">
    <property type="entry name" value="Rcmb_RecR_Znf"/>
</dbReference>
<dbReference type="InterPro" id="IPR006171">
    <property type="entry name" value="TOPRIM_dom"/>
</dbReference>
<dbReference type="InterPro" id="IPR034137">
    <property type="entry name" value="TOPRIM_RecR"/>
</dbReference>
<dbReference type="NCBIfam" id="TIGR00615">
    <property type="entry name" value="recR"/>
    <property type="match status" value="1"/>
</dbReference>
<dbReference type="PANTHER" id="PTHR30446">
    <property type="entry name" value="RECOMBINATION PROTEIN RECR"/>
    <property type="match status" value="1"/>
</dbReference>
<dbReference type="PANTHER" id="PTHR30446:SF0">
    <property type="entry name" value="RECOMBINATION PROTEIN RECR"/>
    <property type="match status" value="1"/>
</dbReference>
<dbReference type="Pfam" id="PF21175">
    <property type="entry name" value="RecR_C"/>
    <property type="match status" value="1"/>
</dbReference>
<dbReference type="Pfam" id="PF21176">
    <property type="entry name" value="RecR_HhH"/>
    <property type="match status" value="1"/>
</dbReference>
<dbReference type="Pfam" id="PF02132">
    <property type="entry name" value="RecR_ZnF"/>
    <property type="match status" value="1"/>
</dbReference>
<dbReference type="Pfam" id="PF13662">
    <property type="entry name" value="Toprim_4"/>
    <property type="match status" value="1"/>
</dbReference>
<dbReference type="SMART" id="SM00493">
    <property type="entry name" value="TOPRIM"/>
    <property type="match status" value="1"/>
</dbReference>
<dbReference type="SUPFAM" id="SSF111304">
    <property type="entry name" value="Recombination protein RecR"/>
    <property type="match status" value="1"/>
</dbReference>
<dbReference type="PROSITE" id="PS01300">
    <property type="entry name" value="RECR"/>
    <property type="match status" value="1"/>
</dbReference>
<dbReference type="PROSITE" id="PS50880">
    <property type="entry name" value="TOPRIM"/>
    <property type="match status" value="1"/>
</dbReference>
<proteinExistence type="inferred from homology"/>
<gene>
    <name evidence="1" type="primary">recR</name>
    <name type="ordered locus">ACIAD2312</name>
</gene>
<organism>
    <name type="scientific">Acinetobacter baylyi (strain ATCC 33305 / BD413 / ADP1)</name>
    <dbReference type="NCBI Taxonomy" id="62977"/>
    <lineage>
        <taxon>Bacteria</taxon>
        <taxon>Pseudomonadati</taxon>
        <taxon>Pseudomonadota</taxon>
        <taxon>Gammaproteobacteria</taxon>
        <taxon>Moraxellales</taxon>
        <taxon>Moraxellaceae</taxon>
        <taxon>Acinetobacter</taxon>
    </lineage>
</organism>